<dbReference type="EMBL" id="CP001132">
    <property type="protein sequence ID" value="ACH83223.1"/>
    <property type="molecule type" value="Genomic_DNA"/>
</dbReference>
<dbReference type="RefSeq" id="WP_012536394.1">
    <property type="nucleotide sequence ID" value="NC_011206.1"/>
</dbReference>
<dbReference type="SMR" id="B5EPM9"/>
<dbReference type="GeneID" id="65280178"/>
<dbReference type="KEGG" id="afe:Lferr_0977"/>
<dbReference type="eggNOG" id="COG0231">
    <property type="taxonomic scope" value="Bacteria"/>
</dbReference>
<dbReference type="HOGENOM" id="CLU_074944_1_1_6"/>
<dbReference type="UniPathway" id="UPA00345"/>
<dbReference type="GO" id="GO:0005737">
    <property type="term" value="C:cytoplasm"/>
    <property type="evidence" value="ECO:0007669"/>
    <property type="project" value="UniProtKB-SubCell"/>
</dbReference>
<dbReference type="GO" id="GO:0003746">
    <property type="term" value="F:translation elongation factor activity"/>
    <property type="evidence" value="ECO:0007669"/>
    <property type="project" value="UniProtKB-UniRule"/>
</dbReference>
<dbReference type="GO" id="GO:0043043">
    <property type="term" value="P:peptide biosynthetic process"/>
    <property type="evidence" value="ECO:0007669"/>
    <property type="project" value="InterPro"/>
</dbReference>
<dbReference type="CDD" id="cd04470">
    <property type="entry name" value="S1_EF-P_repeat_1"/>
    <property type="match status" value="1"/>
</dbReference>
<dbReference type="CDD" id="cd05794">
    <property type="entry name" value="S1_EF-P_repeat_2"/>
    <property type="match status" value="1"/>
</dbReference>
<dbReference type="FunFam" id="2.30.30.30:FF:000003">
    <property type="entry name" value="Elongation factor P"/>
    <property type="match status" value="1"/>
</dbReference>
<dbReference type="FunFam" id="2.40.50.140:FF:000004">
    <property type="entry name" value="Elongation factor P"/>
    <property type="match status" value="1"/>
</dbReference>
<dbReference type="FunFam" id="2.40.50.140:FF:000009">
    <property type="entry name" value="Elongation factor P"/>
    <property type="match status" value="1"/>
</dbReference>
<dbReference type="Gene3D" id="2.30.30.30">
    <property type="match status" value="1"/>
</dbReference>
<dbReference type="Gene3D" id="2.40.50.140">
    <property type="entry name" value="Nucleic acid-binding proteins"/>
    <property type="match status" value="2"/>
</dbReference>
<dbReference type="HAMAP" id="MF_00141">
    <property type="entry name" value="EF_P"/>
    <property type="match status" value="1"/>
</dbReference>
<dbReference type="InterPro" id="IPR015365">
    <property type="entry name" value="Elong-fact-P_C"/>
</dbReference>
<dbReference type="InterPro" id="IPR012340">
    <property type="entry name" value="NA-bd_OB-fold"/>
</dbReference>
<dbReference type="InterPro" id="IPR014722">
    <property type="entry name" value="Rib_uL2_dom2"/>
</dbReference>
<dbReference type="InterPro" id="IPR020599">
    <property type="entry name" value="Transl_elong_fac_P/YeiP"/>
</dbReference>
<dbReference type="InterPro" id="IPR013185">
    <property type="entry name" value="Transl_elong_KOW-like"/>
</dbReference>
<dbReference type="InterPro" id="IPR001059">
    <property type="entry name" value="Transl_elong_P/YeiP_cen"/>
</dbReference>
<dbReference type="InterPro" id="IPR013852">
    <property type="entry name" value="Transl_elong_P/YeiP_CS"/>
</dbReference>
<dbReference type="InterPro" id="IPR011768">
    <property type="entry name" value="Transl_elongation_fac_P"/>
</dbReference>
<dbReference type="InterPro" id="IPR008991">
    <property type="entry name" value="Translation_prot_SH3-like_sf"/>
</dbReference>
<dbReference type="NCBIfam" id="TIGR00038">
    <property type="entry name" value="efp"/>
    <property type="match status" value="1"/>
</dbReference>
<dbReference type="NCBIfam" id="NF001810">
    <property type="entry name" value="PRK00529.1"/>
    <property type="match status" value="1"/>
</dbReference>
<dbReference type="PANTHER" id="PTHR30053">
    <property type="entry name" value="ELONGATION FACTOR P"/>
    <property type="match status" value="1"/>
</dbReference>
<dbReference type="PANTHER" id="PTHR30053:SF14">
    <property type="entry name" value="TRANSLATION ELONGATION FACTOR KOW-LIKE DOMAIN-CONTAINING PROTEIN"/>
    <property type="match status" value="1"/>
</dbReference>
<dbReference type="Pfam" id="PF01132">
    <property type="entry name" value="EFP"/>
    <property type="match status" value="1"/>
</dbReference>
<dbReference type="Pfam" id="PF08207">
    <property type="entry name" value="EFP_N"/>
    <property type="match status" value="1"/>
</dbReference>
<dbReference type="Pfam" id="PF09285">
    <property type="entry name" value="Elong-fact-P_C"/>
    <property type="match status" value="1"/>
</dbReference>
<dbReference type="PIRSF" id="PIRSF005901">
    <property type="entry name" value="EF-P"/>
    <property type="match status" value="1"/>
</dbReference>
<dbReference type="SMART" id="SM01185">
    <property type="entry name" value="EFP"/>
    <property type="match status" value="1"/>
</dbReference>
<dbReference type="SMART" id="SM00841">
    <property type="entry name" value="Elong-fact-P_C"/>
    <property type="match status" value="1"/>
</dbReference>
<dbReference type="SUPFAM" id="SSF50249">
    <property type="entry name" value="Nucleic acid-binding proteins"/>
    <property type="match status" value="2"/>
</dbReference>
<dbReference type="SUPFAM" id="SSF50104">
    <property type="entry name" value="Translation proteins SH3-like domain"/>
    <property type="match status" value="1"/>
</dbReference>
<dbReference type="PROSITE" id="PS01275">
    <property type="entry name" value="EFP"/>
    <property type="match status" value="1"/>
</dbReference>
<name>EFP_ACIF5</name>
<proteinExistence type="inferred from homology"/>
<sequence>MKISAFDIRPGNILEYEKGLWRVLKTDFVKPGKGGAFVQVEMKNIETGTKSNTRFRSGEAMEKAVVEPRTMQYLYADATGYVFMDNENFEQLILSEDLLEGQTGYLLPNTEIQVNLHNERPIGVELPPVVILEVREAEPSIKGQTATGSYKSAQMETGITVMVPQFVNAGEKIRVNTVDGSYIDRA</sequence>
<protein>
    <recommendedName>
        <fullName evidence="1">Elongation factor P</fullName>
        <shortName evidence="1">EF-P</shortName>
    </recommendedName>
</protein>
<gene>
    <name evidence="1" type="primary">efp</name>
    <name type="ordered locus">Lferr_0977</name>
</gene>
<organism>
    <name type="scientific">Acidithiobacillus ferrooxidans (strain ATCC 53993 / BNL-5-31)</name>
    <name type="common">Leptospirillum ferrooxidans (ATCC 53993)</name>
    <dbReference type="NCBI Taxonomy" id="380394"/>
    <lineage>
        <taxon>Bacteria</taxon>
        <taxon>Pseudomonadati</taxon>
        <taxon>Pseudomonadota</taxon>
        <taxon>Acidithiobacillia</taxon>
        <taxon>Acidithiobacillales</taxon>
        <taxon>Acidithiobacillaceae</taxon>
        <taxon>Acidithiobacillus</taxon>
    </lineage>
</organism>
<feature type="chain" id="PRO_1000096117" description="Elongation factor P">
    <location>
        <begin position="1"/>
        <end position="186"/>
    </location>
</feature>
<feature type="modified residue" description="N6-(3,6-diaminohexanoyl)-5-hydroxylysine" evidence="1">
    <location>
        <position position="33"/>
    </location>
</feature>
<comment type="function">
    <text evidence="1">Involved in peptide bond synthesis. Alleviates ribosome stalling that occurs when 3 or more consecutive Pro residues or the sequence PPG is present in a protein, possibly by augmenting the peptidyl transferase activity of the ribosome. Modification of Lys-33 is required for alleviation.</text>
</comment>
<comment type="pathway">
    <text evidence="1">Protein biosynthesis; polypeptide chain elongation.</text>
</comment>
<comment type="subcellular location">
    <subcellularLocation>
        <location evidence="1">Cytoplasm</location>
    </subcellularLocation>
</comment>
<comment type="PTM">
    <text evidence="1">May be beta-lysylated on the epsilon-amino group of Lys-33 by the combined action of EpmA and EpmB, and then hydroxylated on the C5 position of the same residue by EpmC (if this protein is present). Lysylation is critical for the stimulatory effect of EF-P on peptide-bond formation. The lysylation moiety may extend toward the peptidyltransferase center and stabilize the terminal 3-CCA end of the tRNA. Hydroxylation of the C5 position on Lys-33 may allow additional potential stabilizing hydrogen-bond interactions with the P-tRNA.</text>
</comment>
<comment type="similarity">
    <text evidence="1">Belongs to the elongation factor P family.</text>
</comment>
<accession>B5EPM9</accession>
<reference key="1">
    <citation type="submission" date="2008-08" db="EMBL/GenBank/DDBJ databases">
        <title>Complete sequence of Acidithiobacillus ferrooxidans ATCC 53993.</title>
        <authorList>
            <person name="Lucas S."/>
            <person name="Copeland A."/>
            <person name="Lapidus A."/>
            <person name="Glavina del Rio T."/>
            <person name="Dalin E."/>
            <person name="Tice H."/>
            <person name="Bruce D."/>
            <person name="Goodwin L."/>
            <person name="Pitluck S."/>
            <person name="Sims D."/>
            <person name="Brettin T."/>
            <person name="Detter J.C."/>
            <person name="Han C."/>
            <person name="Kuske C.R."/>
            <person name="Larimer F."/>
            <person name="Land M."/>
            <person name="Hauser L."/>
            <person name="Kyrpides N."/>
            <person name="Lykidis A."/>
            <person name="Borole A.P."/>
        </authorList>
    </citation>
    <scope>NUCLEOTIDE SEQUENCE [LARGE SCALE GENOMIC DNA]</scope>
    <source>
        <strain>ATCC 53993 / BNL-5-31</strain>
    </source>
</reference>
<evidence type="ECO:0000255" key="1">
    <source>
        <dbReference type="HAMAP-Rule" id="MF_00141"/>
    </source>
</evidence>
<keyword id="KW-0963">Cytoplasm</keyword>
<keyword id="KW-0251">Elongation factor</keyword>
<keyword id="KW-0379">Hydroxylation</keyword>
<keyword id="KW-0648">Protein biosynthesis</keyword>